<reference key="1">
    <citation type="journal article" date="2008" name="J. Bacteriol.">
        <title>Genome sequence of Staphylococcus aureus strain Newman and comparative analysis of staphylococcal genomes: polymorphism and evolution of two major pathogenicity islands.</title>
        <authorList>
            <person name="Baba T."/>
            <person name="Bae T."/>
            <person name="Schneewind O."/>
            <person name="Takeuchi F."/>
            <person name="Hiramatsu K."/>
        </authorList>
    </citation>
    <scope>NUCLEOTIDE SEQUENCE [LARGE SCALE GENOMIC DNA]</scope>
    <source>
        <strain>Newman</strain>
    </source>
</reference>
<dbReference type="EMBL" id="AP009351">
    <property type="protein sequence ID" value="BAF68408.1"/>
    <property type="molecule type" value="Genomic_DNA"/>
</dbReference>
<dbReference type="RefSeq" id="WP_000623881.1">
    <property type="nucleotide sequence ID" value="NZ_JBBIAE010000006.1"/>
</dbReference>
<dbReference type="SMR" id="A6QJ76"/>
<dbReference type="KEGG" id="sae:NWMN_2136"/>
<dbReference type="HOGENOM" id="CLU_098841_0_1_9"/>
<dbReference type="Proteomes" id="UP000006386">
    <property type="component" value="Chromosome"/>
</dbReference>
<dbReference type="GO" id="GO:0022625">
    <property type="term" value="C:cytosolic large ribosomal subunit"/>
    <property type="evidence" value="ECO:0007669"/>
    <property type="project" value="TreeGrafter"/>
</dbReference>
<dbReference type="GO" id="GO:0008097">
    <property type="term" value="F:5S rRNA binding"/>
    <property type="evidence" value="ECO:0007669"/>
    <property type="project" value="TreeGrafter"/>
</dbReference>
<dbReference type="GO" id="GO:0003735">
    <property type="term" value="F:structural constituent of ribosome"/>
    <property type="evidence" value="ECO:0007669"/>
    <property type="project" value="InterPro"/>
</dbReference>
<dbReference type="GO" id="GO:0006412">
    <property type="term" value="P:translation"/>
    <property type="evidence" value="ECO:0007669"/>
    <property type="project" value="UniProtKB-UniRule"/>
</dbReference>
<dbReference type="CDD" id="cd00432">
    <property type="entry name" value="Ribosomal_L18_L5e"/>
    <property type="match status" value="1"/>
</dbReference>
<dbReference type="FunFam" id="3.30.420.100:FF:000001">
    <property type="entry name" value="50S ribosomal protein L18"/>
    <property type="match status" value="1"/>
</dbReference>
<dbReference type="Gene3D" id="3.30.420.100">
    <property type="match status" value="1"/>
</dbReference>
<dbReference type="HAMAP" id="MF_01337_B">
    <property type="entry name" value="Ribosomal_uL18_B"/>
    <property type="match status" value="1"/>
</dbReference>
<dbReference type="InterPro" id="IPR004389">
    <property type="entry name" value="Ribosomal_uL18_bac-type"/>
</dbReference>
<dbReference type="InterPro" id="IPR005484">
    <property type="entry name" value="Ribosomal_uL18_bac/euk"/>
</dbReference>
<dbReference type="NCBIfam" id="TIGR00060">
    <property type="entry name" value="L18_bact"/>
    <property type="match status" value="1"/>
</dbReference>
<dbReference type="PANTHER" id="PTHR12899">
    <property type="entry name" value="39S RIBOSOMAL PROTEIN L18, MITOCHONDRIAL"/>
    <property type="match status" value="1"/>
</dbReference>
<dbReference type="PANTHER" id="PTHR12899:SF3">
    <property type="entry name" value="LARGE RIBOSOMAL SUBUNIT PROTEIN UL18M"/>
    <property type="match status" value="1"/>
</dbReference>
<dbReference type="Pfam" id="PF00861">
    <property type="entry name" value="Ribosomal_L18p"/>
    <property type="match status" value="1"/>
</dbReference>
<dbReference type="SUPFAM" id="SSF53137">
    <property type="entry name" value="Translational machinery components"/>
    <property type="match status" value="1"/>
</dbReference>
<keyword id="KW-0687">Ribonucleoprotein</keyword>
<keyword id="KW-0689">Ribosomal protein</keyword>
<keyword id="KW-0694">RNA-binding</keyword>
<keyword id="KW-0699">rRNA-binding</keyword>
<protein>
    <recommendedName>
        <fullName evidence="1">Large ribosomal subunit protein uL18</fullName>
    </recommendedName>
    <alternativeName>
        <fullName evidence="2">50S ribosomal protein L18</fullName>
    </alternativeName>
</protein>
<gene>
    <name evidence="1" type="primary">rplR</name>
    <name type="ordered locus">NWMN_2136</name>
</gene>
<feature type="chain" id="PRO_1000073310" description="Large ribosomal subunit protein uL18">
    <location>
        <begin position="1"/>
        <end position="119"/>
    </location>
</feature>
<sequence>MISKIDKNKVRLKRHARVRTNLSGTAEKPRLNVYRSNKHIYAQIIDDNKGVTLAQASSKDSDIATTATKVELATKVGEAIAKKAADKGIKEIVFDRGGYLYHGRVKALAEAARESGLEF</sequence>
<comment type="function">
    <text evidence="1">This is one of the proteins that bind and probably mediate the attachment of the 5S RNA into the large ribosomal subunit, where it forms part of the central protuberance.</text>
</comment>
<comment type="subunit">
    <text evidence="1">Part of the 50S ribosomal subunit; part of the 5S rRNA/L5/L18/L25 subcomplex. Contacts the 5S and 23S rRNAs.</text>
</comment>
<comment type="similarity">
    <text evidence="1">Belongs to the universal ribosomal protein uL18 family.</text>
</comment>
<name>RL18_STAAE</name>
<organism>
    <name type="scientific">Staphylococcus aureus (strain Newman)</name>
    <dbReference type="NCBI Taxonomy" id="426430"/>
    <lineage>
        <taxon>Bacteria</taxon>
        <taxon>Bacillati</taxon>
        <taxon>Bacillota</taxon>
        <taxon>Bacilli</taxon>
        <taxon>Bacillales</taxon>
        <taxon>Staphylococcaceae</taxon>
        <taxon>Staphylococcus</taxon>
    </lineage>
</organism>
<proteinExistence type="inferred from homology"/>
<evidence type="ECO:0000255" key="1">
    <source>
        <dbReference type="HAMAP-Rule" id="MF_01337"/>
    </source>
</evidence>
<evidence type="ECO:0000305" key="2"/>
<accession>A6QJ76</accession>